<name>RL13_CHLCV</name>
<organism>
    <name type="scientific">Chlamydia caviae (strain ATCC VR-813 / DSM 19441 / 03DC25 / GPIC)</name>
    <name type="common">Chlamydophila caviae</name>
    <dbReference type="NCBI Taxonomy" id="227941"/>
    <lineage>
        <taxon>Bacteria</taxon>
        <taxon>Pseudomonadati</taxon>
        <taxon>Chlamydiota</taxon>
        <taxon>Chlamydiia</taxon>
        <taxon>Chlamydiales</taxon>
        <taxon>Chlamydiaceae</taxon>
        <taxon>Chlamydia/Chlamydophila group</taxon>
        <taxon>Chlamydia</taxon>
    </lineage>
</organism>
<keyword id="KW-0687">Ribonucleoprotein</keyword>
<keyword id="KW-0689">Ribosomal protein</keyword>
<feature type="chain" id="PRO_1000055363" description="Large ribosomal subunit protein uL13">
    <location>
        <begin position="1"/>
        <end position="150"/>
    </location>
</feature>
<dbReference type="EMBL" id="AE015925">
    <property type="protein sequence ID" value="AAP05275.1"/>
    <property type="molecule type" value="Genomic_DNA"/>
</dbReference>
<dbReference type="RefSeq" id="WP_011006490.1">
    <property type="nucleotide sequence ID" value="NC_003361.3"/>
</dbReference>
<dbReference type="SMR" id="Q822Z4"/>
<dbReference type="STRING" id="227941.CCA_00532"/>
<dbReference type="KEGG" id="cca:CCA_00532"/>
<dbReference type="eggNOG" id="COG0102">
    <property type="taxonomic scope" value="Bacteria"/>
</dbReference>
<dbReference type="HOGENOM" id="CLU_082184_2_2_0"/>
<dbReference type="OrthoDB" id="9801330at2"/>
<dbReference type="Proteomes" id="UP000002193">
    <property type="component" value="Chromosome"/>
</dbReference>
<dbReference type="GO" id="GO:0022625">
    <property type="term" value="C:cytosolic large ribosomal subunit"/>
    <property type="evidence" value="ECO:0007669"/>
    <property type="project" value="TreeGrafter"/>
</dbReference>
<dbReference type="GO" id="GO:0003729">
    <property type="term" value="F:mRNA binding"/>
    <property type="evidence" value="ECO:0007669"/>
    <property type="project" value="TreeGrafter"/>
</dbReference>
<dbReference type="GO" id="GO:0003735">
    <property type="term" value="F:structural constituent of ribosome"/>
    <property type="evidence" value="ECO:0007669"/>
    <property type="project" value="InterPro"/>
</dbReference>
<dbReference type="GO" id="GO:0017148">
    <property type="term" value="P:negative regulation of translation"/>
    <property type="evidence" value="ECO:0007669"/>
    <property type="project" value="TreeGrafter"/>
</dbReference>
<dbReference type="GO" id="GO:0006412">
    <property type="term" value="P:translation"/>
    <property type="evidence" value="ECO:0007669"/>
    <property type="project" value="UniProtKB-UniRule"/>
</dbReference>
<dbReference type="CDD" id="cd00392">
    <property type="entry name" value="Ribosomal_L13"/>
    <property type="match status" value="1"/>
</dbReference>
<dbReference type="Gene3D" id="3.90.1180.10">
    <property type="entry name" value="Ribosomal protein L13"/>
    <property type="match status" value="1"/>
</dbReference>
<dbReference type="HAMAP" id="MF_01366">
    <property type="entry name" value="Ribosomal_uL13"/>
    <property type="match status" value="1"/>
</dbReference>
<dbReference type="InterPro" id="IPR005822">
    <property type="entry name" value="Ribosomal_uL13"/>
</dbReference>
<dbReference type="InterPro" id="IPR005823">
    <property type="entry name" value="Ribosomal_uL13_bac-type"/>
</dbReference>
<dbReference type="InterPro" id="IPR036899">
    <property type="entry name" value="Ribosomal_uL13_sf"/>
</dbReference>
<dbReference type="NCBIfam" id="TIGR01066">
    <property type="entry name" value="rplM_bact"/>
    <property type="match status" value="1"/>
</dbReference>
<dbReference type="PANTHER" id="PTHR11545:SF2">
    <property type="entry name" value="LARGE RIBOSOMAL SUBUNIT PROTEIN UL13M"/>
    <property type="match status" value="1"/>
</dbReference>
<dbReference type="PANTHER" id="PTHR11545">
    <property type="entry name" value="RIBOSOMAL PROTEIN L13"/>
    <property type="match status" value="1"/>
</dbReference>
<dbReference type="Pfam" id="PF00572">
    <property type="entry name" value="Ribosomal_L13"/>
    <property type="match status" value="1"/>
</dbReference>
<dbReference type="PIRSF" id="PIRSF002181">
    <property type="entry name" value="Ribosomal_L13"/>
    <property type="match status" value="1"/>
</dbReference>
<dbReference type="SUPFAM" id="SSF52161">
    <property type="entry name" value="Ribosomal protein L13"/>
    <property type="match status" value="1"/>
</dbReference>
<sequence length="150" mass="16958">MEKRKDTKTTIAKASDAQNKSWYVIDATGKTLGRLSSEVAKILRGKHKVTYTPHIAMGDGVIVINAEKVHLTGAKKGQKIYRYYTGYISGMREIPFENMLAKKPSYIIEHAIKGMMPKTRLGKRQLKSLRILKGDCYKTFEAQKPILLDV</sequence>
<gene>
    <name evidence="1" type="primary">rplM</name>
    <name type="ordered locus">CCA_00532</name>
</gene>
<protein>
    <recommendedName>
        <fullName evidence="1">Large ribosomal subunit protein uL13</fullName>
    </recommendedName>
    <alternativeName>
        <fullName evidence="2">50S ribosomal protein L13</fullName>
    </alternativeName>
</protein>
<proteinExistence type="inferred from homology"/>
<reference key="1">
    <citation type="journal article" date="2003" name="Nucleic Acids Res.">
        <title>Genome sequence of Chlamydophila caviae (Chlamydia psittaci GPIC): examining the role of niche-specific genes in the evolution of the Chlamydiaceae.</title>
        <authorList>
            <person name="Read T.D."/>
            <person name="Myers G.S.A."/>
            <person name="Brunham R.C."/>
            <person name="Nelson W.C."/>
            <person name="Paulsen I.T."/>
            <person name="Heidelberg J.F."/>
            <person name="Holtzapple E.K."/>
            <person name="Khouri H.M."/>
            <person name="Federova N.B."/>
            <person name="Carty H.A."/>
            <person name="Umayam L.A."/>
            <person name="Haft D.H."/>
            <person name="Peterson J.D."/>
            <person name="Beanan M.J."/>
            <person name="White O."/>
            <person name="Salzberg S.L."/>
            <person name="Hsia R.-C."/>
            <person name="McClarty G."/>
            <person name="Rank R.G."/>
            <person name="Bavoil P.M."/>
            <person name="Fraser C.M."/>
        </authorList>
    </citation>
    <scope>NUCLEOTIDE SEQUENCE [LARGE SCALE GENOMIC DNA]</scope>
    <source>
        <strain>ATCC VR-813 / DSM 19441 / 03DC25 / GPIC</strain>
    </source>
</reference>
<comment type="function">
    <text evidence="1">This protein is one of the early assembly proteins of the 50S ribosomal subunit, although it is not seen to bind rRNA by itself. It is important during the early stages of 50S assembly.</text>
</comment>
<comment type="subunit">
    <text evidence="1">Part of the 50S ribosomal subunit.</text>
</comment>
<comment type="similarity">
    <text evidence="1">Belongs to the universal ribosomal protein uL13 family.</text>
</comment>
<accession>Q822Z4</accession>
<evidence type="ECO:0000255" key="1">
    <source>
        <dbReference type="HAMAP-Rule" id="MF_01366"/>
    </source>
</evidence>
<evidence type="ECO:0000305" key="2"/>